<feature type="chain" id="PRO_0000387367" description="tRNA1(Val) (adenine(37)-N6)-methyltransferase">
    <location>
        <begin position="1"/>
        <end position="245"/>
    </location>
</feature>
<name>TRMN6_ECO5E</name>
<sequence length="245" mass="27215">MSQSTSVLRRNGFTFKQFFVAHDRCAMKAGTDGILLGAWAPVAGVKRCLDIGAGSGLLALMLAQRTSDSVIIDAVELESEAATQAQENVAQSPWLERINVHTADIQQWVTQQTARFDLIISNPPYYEQGVECATPQREQARYTTSLDHQTLLTCAAECITEEGFFCVVLPEQIGNSFTELALSMGWHLRLRTDVAENEARLPHRVLLAFSPQAGECFSDRLVIRGPDQNYSEAYTALTQAFYLFM</sequence>
<accession>B5Z149</accession>
<protein>
    <recommendedName>
        <fullName evidence="1">tRNA1(Val) (adenine(37)-N6)-methyltransferase</fullName>
        <ecNumber evidence="1">2.1.1.223</ecNumber>
    </recommendedName>
    <alternativeName>
        <fullName evidence="1">tRNA m6A37 methyltransferase</fullName>
    </alternativeName>
</protein>
<dbReference type="EC" id="2.1.1.223" evidence="1"/>
<dbReference type="EMBL" id="CP001164">
    <property type="protein sequence ID" value="ACI38891.1"/>
    <property type="molecule type" value="Genomic_DNA"/>
</dbReference>
<dbReference type="SMR" id="B5Z149"/>
<dbReference type="KEGG" id="ecf:ECH74115_3811"/>
<dbReference type="HOGENOM" id="CLU_061983_0_0_6"/>
<dbReference type="GO" id="GO:0005737">
    <property type="term" value="C:cytoplasm"/>
    <property type="evidence" value="ECO:0007669"/>
    <property type="project" value="UniProtKB-SubCell"/>
</dbReference>
<dbReference type="GO" id="GO:0003676">
    <property type="term" value="F:nucleic acid binding"/>
    <property type="evidence" value="ECO:0007669"/>
    <property type="project" value="InterPro"/>
</dbReference>
<dbReference type="GO" id="GO:0016430">
    <property type="term" value="F:tRNA (adenine-N6)-methyltransferase activity"/>
    <property type="evidence" value="ECO:0007669"/>
    <property type="project" value="UniProtKB-UniRule"/>
</dbReference>
<dbReference type="GO" id="GO:0032259">
    <property type="term" value="P:methylation"/>
    <property type="evidence" value="ECO:0007669"/>
    <property type="project" value="UniProtKB-KW"/>
</dbReference>
<dbReference type="GO" id="GO:0008033">
    <property type="term" value="P:tRNA processing"/>
    <property type="evidence" value="ECO:0007669"/>
    <property type="project" value="UniProtKB-UniRule"/>
</dbReference>
<dbReference type="CDD" id="cd02440">
    <property type="entry name" value="AdoMet_MTases"/>
    <property type="match status" value="1"/>
</dbReference>
<dbReference type="Gene3D" id="3.40.50.150">
    <property type="entry name" value="Vaccinia Virus protein VP39"/>
    <property type="match status" value="1"/>
</dbReference>
<dbReference type="HAMAP" id="MF_01872">
    <property type="entry name" value="tRNA_methyltr_YfiC"/>
    <property type="match status" value="1"/>
</dbReference>
<dbReference type="InterPro" id="IPR002052">
    <property type="entry name" value="DNA_methylase_N6_adenine_CS"/>
</dbReference>
<dbReference type="InterPro" id="IPR029063">
    <property type="entry name" value="SAM-dependent_MTases_sf"/>
</dbReference>
<dbReference type="InterPro" id="IPR007848">
    <property type="entry name" value="Small_mtfrase_dom"/>
</dbReference>
<dbReference type="InterPro" id="IPR050210">
    <property type="entry name" value="tRNA_Adenine-N(6)_MTase"/>
</dbReference>
<dbReference type="InterPro" id="IPR022882">
    <property type="entry name" value="tRNA_adenine-N6_MeTrfase"/>
</dbReference>
<dbReference type="NCBIfam" id="NF047853">
    <property type="entry name" value="tRm6a37MtseTrmN"/>
    <property type="match status" value="1"/>
</dbReference>
<dbReference type="PANTHER" id="PTHR47739">
    <property type="entry name" value="TRNA1(VAL) (ADENINE(37)-N6)-METHYLTRANSFERASE"/>
    <property type="match status" value="1"/>
</dbReference>
<dbReference type="PANTHER" id="PTHR47739:SF1">
    <property type="entry name" value="TRNA1(VAL) (ADENINE(37)-N6)-METHYLTRANSFERASE"/>
    <property type="match status" value="1"/>
</dbReference>
<dbReference type="Pfam" id="PF05175">
    <property type="entry name" value="MTS"/>
    <property type="match status" value="1"/>
</dbReference>
<dbReference type="SUPFAM" id="SSF53335">
    <property type="entry name" value="S-adenosyl-L-methionine-dependent methyltransferases"/>
    <property type="match status" value="1"/>
</dbReference>
<dbReference type="PROSITE" id="PS00092">
    <property type="entry name" value="N6_MTASE"/>
    <property type="match status" value="1"/>
</dbReference>
<comment type="function">
    <text evidence="1">Specifically methylates the adenine in position 37 of tRNA(1)(Val) (anticodon cmo5UAC).</text>
</comment>
<comment type="catalytic activity">
    <reaction evidence="1">
        <text>adenosine(37) in tRNA1(Val) + S-adenosyl-L-methionine = N(6)-methyladenosine(37) in tRNA1(Val) + S-adenosyl-L-homocysteine + H(+)</text>
        <dbReference type="Rhea" id="RHEA:43160"/>
        <dbReference type="Rhea" id="RHEA-COMP:10369"/>
        <dbReference type="Rhea" id="RHEA-COMP:10370"/>
        <dbReference type="ChEBI" id="CHEBI:15378"/>
        <dbReference type="ChEBI" id="CHEBI:57856"/>
        <dbReference type="ChEBI" id="CHEBI:59789"/>
        <dbReference type="ChEBI" id="CHEBI:74411"/>
        <dbReference type="ChEBI" id="CHEBI:74449"/>
        <dbReference type="EC" id="2.1.1.223"/>
    </reaction>
</comment>
<comment type="subcellular location">
    <subcellularLocation>
        <location evidence="1">Cytoplasm</location>
    </subcellularLocation>
</comment>
<comment type="similarity">
    <text evidence="1">Belongs to the methyltransferase superfamily. tRNA (adenine-N(6)-)-methyltransferase family.</text>
</comment>
<keyword id="KW-0963">Cytoplasm</keyword>
<keyword id="KW-0489">Methyltransferase</keyword>
<keyword id="KW-0949">S-adenosyl-L-methionine</keyword>
<keyword id="KW-0808">Transferase</keyword>
<keyword id="KW-0819">tRNA processing</keyword>
<evidence type="ECO:0000255" key="1">
    <source>
        <dbReference type="HAMAP-Rule" id="MF_01872"/>
    </source>
</evidence>
<gene>
    <name evidence="1" type="primary">yfiC</name>
    <name type="ordered locus">ECH74115_3811</name>
</gene>
<reference key="1">
    <citation type="journal article" date="2011" name="Proc. Natl. Acad. Sci. U.S.A.">
        <title>Genomic anatomy of Escherichia coli O157:H7 outbreaks.</title>
        <authorList>
            <person name="Eppinger M."/>
            <person name="Mammel M.K."/>
            <person name="Leclerc J.E."/>
            <person name="Ravel J."/>
            <person name="Cebula T.A."/>
        </authorList>
    </citation>
    <scope>NUCLEOTIDE SEQUENCE [LARGE SCALE GENOMIC DNA]</scope>
    <source>
        <strain>EC4115 / EHEC</strain>
    </source>
</reference>
<organism>
    <name type="scientific">Escherichia coli O157:H7 (strain EC4115 / EHEC)</name>
    <dbReference type="NCBI Taxonomy" id="444450"/>
    <lineage>
        <taxon>Bacteria</taxon>
        <taxon>Pseudomonadati</taxon>
        <taxon>Pseudomonadota</taxon>
        <taxon>Gammaproteobacteria</taxon>
        <taxon>Enterobacterales</taxon>
        <taxon>Enterobacteriaceae</taxon>
        <taxon>Escherichia</taxon>
    </lineage>
</organism>
<proteinExistence type="inferred from homology"/>